<organism>
    <name type="scientific">Streptococcus sanguinis (strain SK36)</name>
    <dbReference type="NCBI Taxonomy" id="388919"/>
    <lineage>
        <taxon>Bacteria</taxon>
        <taxon>Bacillati</taxon>
        <taxon>Bacillota</taxon>
        <taxon>Bacilli</taxon>
        <taxon>Lactobacillales</taxon>
        <taxon>Streptococcaceae</taxon>
        <taxon>Streptococcus</taxon>
    </lineage>
</organism>
<accession>A3CQB8</accession>
<evidence type="ECO:0000255" key="1">
    <source>
        <dbReference type="HAMAP-Rule" id="MF_00171"/>
    </source>
</evidence>
<protein>
    <recommendedName>
        <fullName evidence="1">tRNA pseudouridine synthase A</fullName>
        <ecNumber evidence="1">5.4.99.12</ecNumber>
    </recommendedName>
    <alternativeName>
        <fullName evidence="1">tRNA pseudouridine(38-40) synthase</fullName>
    </alternativeName>
    <alternativeName>
        <fullName evidence="1">tRNA pseudouridylate synthase I</fullName>
    </alternativeName>
    <alternativeName>
        <fullName evidence="1">tRNA-uridine isomerase I</fullName>
    </alternativeName>
</protein>
<sequence>MTRYKAIISYDGYGFAGFQRQPHARSVQEEIEKTLTRINKGRPVVIHGAGRTDSGVHALGQVLHFDLPEDRDEEKLRFALDTQTPEDIDFISVEQVSDDFHSRYNKHSKTYEFLVDIGRPKNPMMRHYATHYPYPLELGLIEEAIAQLEGTHDFTGFTASGTSVEDKVRTITEAKVRFDAERNFLVFTFSGNGFLYKQIRNMVGTLLKIGNKRMPIEQIQRILAEKDRHLAGPTAGPNGLYLKEIRYEE</sequence>
<reference key="1">
    <citation type="journal article" date="2007" name="J. Bacteriol.">
        <title>Genome of the opportunistic pathogen Streptococcus sanguinis.</title>
        <authorList>
            <person name="Xu P."/>
            <person name="Alves J.M."/>
            <person name="Kitten T."/>
            <person name="Brown A."/>
            <person name="Chen Z."/>
            <person name="Ozaki L.S."/>
            <person name="Manque P."/>
            <person name="Ge X."/>
            <person name="Serrano M.G."/>
            <person name="Puiu D."/>
            <person name="Hendricks S."/>
            <person name="Wang Y."/>
            <person name="Chaplin M.D."/>
            <person name="Akan D."/>
            <person name="Paik S."/>
            <person name="Peterson D.L."/>
            <person name="Macrina F.L."/>
            <person name="Buck G.A."/>
        </authorList>
    </citation>
    <scope>NUCLEOTIDE SEQUENCE [LARGE SCALE GENOMIC DNA]</scope>
    <source>
        <strain>SK36</strain>
    </source>
</reference>
<comment type="function">
    <text evidence="1">Formation of pseudouridine at positions 38, 39 and 40 in the anticodon stem and loop of transfer RNAs.</text>
</comment>
<comment type="catalytic activity">
    <reaction evidence="1">
        <text>uridine(38/39/40) in tRNA = pseudouridine(38/39/40) in tRNA</text>
        <dbReference type="Rhea" id="RHEA:22376"/>
        <dbReference type="Rhea" id="RHEA-COMP:10085"/>
        <dbReference type="Rhea" id="RHEA-COMP:10087"/>
        <dbReference type="ChEBI" id="CHEBI:65314"/>
        <dbReference type="ChEBI" id="CHEBI:65315"/>
        <dbReference type="EC" id="5.4.99.12"/>
    </reaction>
</comment>
<comment type="subunit">
    <text evidence="1">Homodimer.</text>
</comment>
<comment type="similarity">
    <text evidence="1">Belongs to the tRNA pseudouridine synthase TruA family.</text>
</comment>
<proteinExistence type="inferred from homology"/>
<dbReference type="EC" id="5.4.99.12" evidence="1"/>
<dbReference type="EMBL" id="CP000387">
    <property type="protein sequence ID" value="ABN45373.1"/>
    <property type="molecule type" value="Genomic_DNA"/>
</dbReference>
<dbReference type="RefSeq" id="WP_011837490.1">
    <property type="nucleotide sequence ID" value="NC_009009.1"/>
</dbReference>
<dbReference type="RefSeq" id="YP_001035923.1">
    <property type="nucleotide sequence ID" value="NC_009009.1"/>
</dbReference>
<dbReference type="SMR" id="A3CQB8"/>
<dbReference type="STRING" id="388919.SSA_2002"/>
<dbReference type="KEGG" id="ssa:SSA_2002"/>
<dbReference type="PATRIC" id="fig|388919.9.peg.1898"/>
<dbReference type="eggNOG" id="COG0101">
    <property type="taxonomic scope" value="Bacteria"/>
</dbReference>
<dbReference type="HOGENOM" id="CLU_014673_0_1_9"/>
<dbReference type="OrthoDB" id="9811823at2"/>
<dbReference type="Proteomes" id="UP000002148">
    <property type="component" value="Chromosome"/>
</dbReference>
<dbReference type="GO" id="GO:0003723">
    <property type="term" value="F:RNA binding"/>
    <property type="evidence" value="ECO:0007669"/>
    <property type="project" value="InterPro"/>
</dbReference>
<dbReference type="GO" id="GO:0160147">
    <property type="term" value="F:tRNA pseudouridine(38-40) synthase activity"/>
    <property type="evidence" value="ECO:0007669"/>
    <property type="project" value="UniProtKB-EC"/>
</dbReference>
<dbReference type="GO" id="GO:0031119">
    <property type="term" value="P:tRNA pseudouridine synthesis"/>
    <property type="evidence" value="ECO:0007669"/>
    <property type="project" value="UniProtKB-UniRule"/>
</dbReference>
<dbReference type="CDD" id="cd02570">
    <property type="entry name" value="PseudoU_synth_EcTruA"/>
    <property type="match status" value="1"/>
</dbReference>
<dbReference type="FunFam" id="3.30.70.580:FF:000001">
    <property type="entry name" value="tRNA pseudouridine synthase A"/>
    <property type="match status" value="1"/>
</dbReference>
<dbReference type="Gene3D" id="3.30.70.660">
    <property type="entry name" value="Pseudouridine synthase I, catalytic domain, C-terminal subdomain"/>
    <property type="match status" value="1"/>
</dbReference>
<dbReference type="Gene3D" id="3.30.70.580">
    <property type="entry name" value="Pseudouridine synthase I, catalytic domain, N-terminal subdomain"/>
    <property type="match status" value="1"/>
</dbReference>
<dbReference type="HAMAP" id="MF_00171">
    <property type="entry name" value="TruA"/>
    <property type="match status" value="1"/>
</dbReference>
<dbReference type="InterPro" id="IPR020103">
    <property type="entry name" value="PsdUridine_synth_cat_dom_sf"/>
</dbReference>
<dbReference type="InterPro" id="IPR001406">
    <property type="entry name" value="PsdUridine_synth_TruA"/>
</dbReference>
<dbReference type="InterPro" id="IPR020097">
    <property type="entry name" value="PsdUridine_synth_TruA_a/b_dom"/>
</dbReference>
<dbReference type="InterPro" id="IPR020095">
    <property type="entry name" value="PsdUridine_synth_TruA_C"/>
</dbReference>
<dbReference type="InterPro" id="IPR020094">
    <property type="entry name" value="TruA/RsuA/RluB/E/F_N"/>
</dbReference>
<dbReference type="NCBIfam" id="TIGR00071">
    <property type="entry name" value="hisT_truA"/>
    <property type="match status" value="1"/>
</dbReference>
<dbReference type="PANTHER" id="PTHR11142">
    <property type="entry name" value="PSEUDOURIDYLATE SYNTHASE"/>
    <property type="match status" value="1"/>
</dbReference>
<dbReference type="PANTHER" id="PTHR11142:SF0">
    <property type="entry name" value="TRNA PSEUDOURIDINE SYNTHASE-LIKE 1"/>
    <property type="match status" value="1"/>
</dbReference>
<dbReference type="Pfam" id="PF01416">
    <property type="entry name" value="PseudoU_synth_1"/>
    <property type="match status" value="2"/>
</dbReference>
<dbReference type="PIRSF" id="PIRSF001430">
    <property type="entry name" value="tRNA_psdUrid_synth"/>
    <property type="match status" value="1"/>
</dbReference>
<dbReference type="SUPFAM" id="SSF55120">
    <property type="entry name" value="Pseudouridine synthase"/>
    <property type="match status" value="1"/>
</dbReference>
<gene>
    <name evidence="1" type="primary">truA</name>
    <name type="ordered locus">SSA_2002</name>
</gene>
<keyword id="KW-0413">Isomerase</keyword>
<keyword id="KW-1185">Reference proteome</keyword>
<keyword id="KW-0819">tRNA processing</keyword>
<name>TRUA_STRSV</name>
<feature type="chain" id="PRO_1000017199" description="tRNA pseudouridine synthase A">
    <location>
        <begin position="1"/>
        <end position="249"/>
    </location>
</feature>
<feature type="active site" description="Nucleophile" evidence="1">
    <location>
        <position position="53"/>
    </location>
</feature>
<feature type="binding site" evidence="1">
    <location>
        <position position="111"/>
    </location>
    <ligand>
        <name>substrate</name>
    </ligand>
</feature>